<evidence type="ECO:0000255" key="1">
    <source>
        <dbReference type="HAMAP-Rule" id="MF_00381"/>
    </source>
</evidence>
<organism>
    <name type="scientific">Klebsiella pneumoniae (strain 342)</name>
    <dbReference type="NCBI Taxonomy" id="507522"/>
    <lineage>
        <taxon>Bacteria</taxon>
        <taxon>Pseudomonadati</taxon>
        <taxon>Pseudomonadota</taxon>
        <taxon>Gammaproteobacteria</taxon>
        <taxon>Enterobacterales</taxon>
        <taxon>Enterobacteriaceae</taxon>
        <taxon>Klebsiella/Raoultella group</taxon>
        <taxon>Klebsiella</taxon>
        <taxon>Klebsiella pneumoniae complex</taxon>
    </lineage>
</organism>
<protein>
    <recommendedName>
        <fullName evidence="1">Integration host factor subunit beta</fullName>
        <shortName evidence="1">IHF-beta</shortName>
    </recommendedName>
</protein>
<keyword id="KW-0233">DNA recombination</keyword>
<keyword id="KW-0238">DNA-binding</keyword>
<keyword id="KW-0804">Transcription</keyword>
<keyword id="KW-0805">Transcription regulation</keyword>
<keyword id="KW-0810">Translation regulation</keyword>
<comment type="function">
    <text evidence="1">This protein is one of the two subunits of integration host factor, a specific DNA-binding protein that functions in genetic recombination as well as in transcriptional and translational control.</text>
</comment>
<comment type="subunit">
    <text evidence="1">Heterodimer of an alpha and a beta chain.</text>
</comment>
<comment type="similarity">
    <text evidence="1">Belongs to the bacterial histone-like protein family.</text>
</comment>
<reference key="1">
    <citation type="journal article" date="2008" name="PLoS Genet.">
        <title>Complete genome sequence of the N2-fixing broad host range endophyte Klebsiella pneumoniae 342 and virulence predictions verified in mice.</title>
        <authorList>
            <person name="Fouts D.E."/>
            <person name="Tyler H.L."/>
            <person name="DeBoy R.T."/>
            <person name="Daugherty S."/>
            <person name="Ren Q."/>
            <person name="Badger J.H."/>
            <person name="Durkin A.S."/>
            <person name="Huot H."/>
            <person name="Shrivastava S."/>
            <person name="Kothari S."/>
            <person name="Dodson R.J."/>
            <person name="Mohamoud Y."/>
            <person name="Khouri H."/>
            <person name="Roesch L.F.W."/>
            <person name="Krogfelt K.A."/>
            <person name="Struve C."/>
            <person name="Triplett E.W."/>
            <person name="Methe B.A."/>
        </authorList>
    </citation>
    <scope>NUCLEOTIDE SEQUENCE [LARGE SCALE GENOMIC DNA]</scope>
    <source>
        <strain>342</strain>
    </source>
</reference>
<gene>
    <name evidence="1" type="primary">ihfB</name>
    <name evidence="1" type="synonym">himD</name>
    <name type="ordered locus">KPK_3620</name>
</gene>
<dbReference type="EMBL" id="CP000964">
    <property type="protein sequence ID" value="ACI06745.1"/>
    <property type="molecule type" value="Genomic_DNA"/>
</dbReference>
<dbReference type="SMR" id="B5XY84"/>
<dbReference type="KEGG" id="kpe:KPK_3620"/>
<dbReference type="HOGENOM" id="CLU_105066_2_0_6"/>
<dbReference type="Proteomes" id="UP000001734">
    <property type="component" value="Chromosome"/>
</dbReference>
<dbReference type="GO" id="GO:0005694">
    <property type="term" value="C:chromosome"/>
    <property type="evidence" value="ECO:0007669"/>
    <property type="project" value="InterPro"/>
</dbReference>
<dbReference type="GO" id="GO:0005829">
    <property type="term" value="C:cytosol"/>
    <property type="evidence" value="ECO:0007669"/>
    <property type="project" value="TreeGrafter"/>
</dbReference>
<dbReference type="GO" id="GO:0003677">
    <property type="term" value="F:DNA binding"/>
    <property type="evidence" value="ECO:0007669"/>
    <property type="project" value="UniProtKB-UniRule"/>
</dbReference>
<dbReference type="GO" id="GO:0030527">
    <property type="term" value="F:structural constituent of chromatin"/>
    <property type="evidence" value="ECO:0007669"/>
    <property type="project" value="InterPro"/>
</dbReference>
<dbReference type="GO" id="GO:0006310">
    <property type="term" value="P:DNA recombination"/>
    <property type="evidence" value="ECO:0007669"/>
    <property type="project" value="UniProtKB-UniRule"/>
</dbReference>
<dbReference type="GO" id="GO:0006355">
    <property type="term" value="P:regulation of DNA-templated transcription"/>
    <property type="evidence" value="ECO:0007669"/>
    <property type="project" value="UniProtKB-UniRule"/>
</dbReference>
<dbReference type="GO" id="GO:0006417">
    <property type="term" value="P:regulation of translation"/>
    <property type="evidence" value="ECO:0007669"/>
    <property type="project" value="UniProtKB-UniRule"/>
</dbReference>
<dbReference type="CDD" id="cd13836">
    <property type="entry name" value="IHF_B"/>
    <property type="match status" value="1"/>
</dbReference>
<dbReference type="FunFam" id="4.10.520.10:FF:000003">
    <property type="entry name" value="Integration host factor subunit beta"/>
    <property type="match status" value="1"/>
</dbReference>
<dbReference type="Gene3D" id="4.10.520.10">
    <property type="entry name" value="IHF-like DNA-binding proteins"/>
    <property type="match status" value="1"/>
</dbReference>
<dbReference type="HAMAP" id="MF_00381">
    <property type="entry name" value="IHF_beta"/>
    <property type="match status" value="1"/>
</dbReference>
<dbReference type="InterPro" id="IPR000119">
    <property type="entry name" value="Hist_DNA-bd"/>
</dbReference>
<dbReference type="InterPro" id="IPR020816">
    <property type="entry name" value="Histone-like_DNA-bd_CS"/>
</dbReference>
<dbReference type="InterPro" id="IPR010992">
    <property type="entry name" value="IHF-like_DNA-bd_dom_sf"/>
</dbReference>
<dbReference type="InterPro" id="IPR005685">
    <property type="entry name" value="IHF_beta"/>
</dbReference>
<dbReference type="NCBIfam" id="TIGR00988">
    <property type="entry name" value="hip"/>
    <property type="match status" value="1"/>
</dbReference>
<dbReference type="NCBIfam" id="NF001222">
    <property type="entry name" value="PRK00199.1"/>
    <property type="match status" value="1"/>
</dbReference>
<dbReference type="PANTHER" id="PTHR33175">
    <property type="entry name" value="DNA-BINDING PROTEIN HU"/>
    <property type="match status" value="1"/>
</dbReference>
<dbReference type="PANTHER" id="PTHR33175:SF5">
    <property type="entry name" value="INTEGRATION HOST FACTOR SUBUNIT BETA"/>
    <property type="match status" value="1"/>
</dbReference>
<dbReference type="Pfam" id="PF00216">
    <property type="entry name" value="Bac_DNA_binding"/>
    <property type="match status" value="1"/>
</dbReference>
<dbReference type="PRINTS" id="PR01727">
    <property type="entry name" value="DNABINDINGHU"/>
</dbReference>
<dbReference type="SMART" id="SM00411">
    <property type="entry name" value="BHL"/>
    <property type="match status" value="1"/>
</dbReference>
<dbReference type="SUPFAM" id="SSF47729">
    <property type="entry name" value="IHF-like DNA-binding proteins"/>
    <property type="match status" value="1"/>
</dbReference>
<dbReference type="PROSITE" id="PS00045">
    <property type="entry name" value="HISTONE_LIKE"/>
    <property type="match status" value="1"/>
</dbReference>
<name>IHFB_KLEP3</name>
<proteinExistence type="inferred from homology"/>
<sequence>MTKSELIERLASQQSHIPAKAVEDAVKEMLEHMASTLAQGERIEIRGFGSFSLHYRAPRTGRNPKTGDKVELEGKYVPHFKPGKELRDRANIYEE</sequence>
<accession>B5XY84</accession>
<feature type="chain" id="PRO_1000122221" description="Integration host factor subunit beta">
    <location>
        <begin position="1"/>
        <end position="95"/>
    </location>
</feature>